<sequence>MAIERTLSIVKPDAVSKNHIGEIFARFEKAGLKIVATKMKHLSQADAEGFYAEHKERGFFGDLVAFMTSGPVVVSVLEGENAVLAHREILGATNPKEAAPGTIRADFAVSIDENAAHGSDSVASAEREIAYFFADNEICPRTR</sequence>
<gene>
    <name evidence="3" type="primary">ndk</name>
    <name type="ordered locus">ABAYE3267</name>
</gene>
<protein>
    <recommendedName>
        <fullName evidence="3">Nucleoside diphosphate kinase</fullName>
        <shortName evidence="3">NDK</shortName>
        <shortName evidence="3">NDP kinase</shortName>
        <ecNumber evidence="3">2.7.4.6</ecNumber>
    </recommendedName>
    <alternativeName>
        <fullName evidence="3">Nucleoside-2-P kinase</fullName>
    </alternativeName>
</protein>
<organism>
    <name type="scientific">Acinetobacter baumannii (strain AYE)</name>
    <dbReference type="NCBI Taxonomy" id="509173"/>
    <lineage>
        <taxon>Bacteria</taxon>
        <taxon>Pseudomonadati</taxon>
        <taxon>Pseudomonadota</taxon>
        <taxon>Gammaproteobacteria</taxon>
        <taxon>Moraxellales</taxon>
        <taxon>Moraxellaceae</taxon>
        <taxon>Acinetobacter</taxon>
        <taxon>Acinetobacter calcoaceticus/baumannii complex</taxon>
    </lineage>
</organism>
<name>NDK_ACIBY</name>
<proteinExistence type="inferred from homology"/>
<accession>B0V4U1</accession>
<reference key="1">
    <citation type="journal article" date="2008" name="PLoS ONE">
        <title>Comparative analysis of Acinetobacters: three genomes for three lifestyles.</title>
        <authorList>
            <person name="Vallenet D."/>
            <person name="Nordmann P."/>
            <person name="Barbe V."/>
            <person name="Poirel L."/>
            <person name="Mangenot S."/>
            <person name="Bataille E."/>
            <person name="Dossat C."/>
            <person name="Gas S."/>
            <person name="Kreimeyer A."/>
            <person name="Lenoble P."/>
            <person name="Oztas S."/>
            <person name="Poulain J."/>
            <person name="Segurens B."/>
            <person name="Robert C."/>
            <person name="Abergel C."/>
            <person name="Claverie J.-M."/>
            <person name="Raoult D."/>
            <person name="Medigue C."/>
            <person name="Weissenbach J."/>
            <person name="Cruveiller S."/>
        </authorList>
    </citation>
    <scope>NUCLEOTIDE SEQUENCE [LARGE SCALE GENOMIC DNA]</scope>
    <source>
        <strain>AYE</strain>
    </source>
</reference>
<feature type="chain" id="PRO_1000192248" description="Nucleoside diphosphate kinase">
    <location>
        <begin position="1"/>
        <end position="143"/>
    </location>
</feature>
<feature type="active site" description="Pros-phosphohistidine intermediate" evidence="3">
    <location>
        <position position="117"/>
    </location>
</feature>
<feature type="binding site" evidence="3">
    <location>
        <position position="11"/>
    </location>
    <ligand>
        <name>ATP</name>
        <dbReference type="ChEBI" id="CHEBI:30616"/>
    </ligand>
</feature>
<feature type="binding site" evidence="3">
    <location>
        <position position="59"/>
    </location>
    <ligand>
        <name>ATP</name>
        <dbReference type="ChEBI" id="CHEBI:30616"/>
    </ligand>
</feature>
<feature type="binding site" evidence="3">
    <location>
        <position position="87"/>
    </location>
    <ligand>
        <name>ATP</name>
        <dbReference type="ChEBI" id="CHEBI:30616"/>
    </ligand>
</feature>
<feature type="binding site" evidence="3">
    <location>
        <position position="93"/>
    </location>
    <ligand>
        <name>ATP</name>
        <dbReference type="ChEBI" id="CHEBI:30616"/>
    </ligand>
</feature>
<feature type="binding site" evidence="3">
    <location>
        <position position="104"/>
    </location>
    <ligand>
        <name>ATP</name>
        <dbReference type="ChEBI" id="CHEBI:30616"/>
    </ligand>
</feature>
<feature type="binding site" evidence="3">
    <location>
        <position position="114"/>
    </location>
    <ligand>
        <name>ATP</name>
        <dbReference type="ChEBI" id="CHEBI:30616"/>
    </ligand>
</feature>
<dbReference type="EC" id="2.7.4.6" evidence="3"/>
<dbReference type="EMBL" id="CU459141">
    <property type="protein sequence ID" value="CAM88068.1"/>
    <property type="molecule type" value="Genomic_DNA"/>
</dbReference>
<dbReference type="RefSeq" id="WP_000963851.1">
    <property type="nucleotide sequence ID" value="NZ_JBDGFB010000008.1"/>
</dbReference>
<dbReference type="SMR" id="B0V4U1"/>
<dbReference type="EnsemblBacteria" id="CAM88068">
    <property type="protein sequence ID" value="CAM88068"/>
    <property type="gene ID" value="ABAYE3267"/>
</dbReference>
<dbReference type="GeneID" id="92892501"/>
<dbReference type="KEGG" id="aby:ABAYE3267"/>
<dbReference type="HOGENOM" id="CLU_060216_8_1_6"/>
<dbReference type="GO" id="GO:0005737">
    <property type="term" value="C:cytoplasm"/>
    <property type="evidence" value="ECO:0007669"/>
    <property type="project" value="UniProtKB-SubCell"/>
</dbReference>
<dbReference type="GO" id="GO:0005524">
    <property type="term" value="F:ATP binding"/>
    <property type="evidence" value="ECO:0007669"/>
    <property type="project" value="UniProtKB-UniRule"/>
</dbReference>
<dbReference type="GO" id="GO:0046872">
    <property type="term" value="F:metal ion binding"/>
    <property type="evidence" value="ECO:0007669"/>
    <property type="project" value="UniProtKB-KW"/>
</dbReference>
<dbReference type="GO" id="GO:0004550">
    <property type="term" value="F:nucleoside diphosphate kinase activity"/>
    <property type="evidence" value="ECO:0007669"/>
    <property type="project" value="UniProtKB-UniRule"/>
</dbReference>
<dbReference type="GO" id="GO:0006241">
    <property type="term" value="P:CTP biosynthetic process"/>
    <property type="evidence" value="ECO:0007669"/>
    <property type="project" value="UniProtKB-UniRule"/>
</dbReference>
<dbReference type="GO" id="GO:0006183">
    <property type="term" value="P:GTP biosynthetic process"/>
    <property type="evidence" value="ECO:0007669"/>
    <property type="project" value="UniProtKB-UniRule"/>
</dbReference>
<dbReference type="GO" id="GO:0006228">
    <property type="term" value="P:UTP biosynthetic process"/>
    <property type="evidence" value="ECO:0007669"/>
    <property type="project" value="UniProtKB-UniRule"/>
</dbReference>
<dbReference type="CDD" id="cd04413">
    <property type="entry name" value="NDPk_I"/>
    <property type="match status" value="1"/>
</dbReference>
<dbReference type="FunFam" id="3.30.70.141:FF:000001">
    <property type="entry name" value="Nucleoside diphosphate kinase"/>
    <property type="match status" value="1"/>
</dbReference>
<dbReference type="Gene3D" id="3.30.70.141">
    <property type="entry name" value="Nucleoside diphosphate kinase-like domain"/>
    <property type="match status" value="1"/>
</dbReference>
<dbReference type="HAMAP" id="MF_00451">
    <property type="entry name" value="NDP_kinase"/>
    <property type="match status" value="1"/>
</dbReference>
<dbReference type="InterPro" id="IPR034907">
    <property type="entry name" value="NDK-like_dom"/>
</dbReference>
<dbReference type="InterPro" id="IPR036850">
    <property type="entry name" value="NDK-like_dom_sf"/>
</dbReference>
<dbReference type="InterPro" id="IPR001564">
    <property type="entry name" value="Nucleoside_diP_kinase"/>
</dbReference>
<dbReference type="InterPro" id="IPR023005">
    <property type="entry name" value="Nucleoside_diP_kinase_AS"/>
</dbReference>
<dbReference type="NCBIfam" id="NF001908">
    <property type="entry name" value="PRK00668.1"/>
    <property type="match status" value="1"/>
</dbReference>
<dbReference type="PANTHER" id="PTHR46161">
    <property type="entry name" value="NUCLEOSIDE DIPHOSPHATE KINASE"/>
    <property type="match status" value="1"/>
</dbReference>
<dbReference type="PANTHER" id="PTHR46161:SF3">
    <property type="entry name" value="NUCLEOSIDE DIPHOSPHATE KINASE DDB_G0292928-RELATED"/>
    <property type="match status" value="1"/>
</dbReference>
<dbReference type="Pfam" id="PF00334">
    <property type="entry name" value="NDK"/>
    <property type="match status" value="1"/>
</dbReference>
<dbReference type="PRINTS" id="PR01243">
    <property type="entry name" value="NUCDPKINASE"/>
</dbReference>
<dbReference type="SMART" id="SM00562">
    <property type="entry name" value="NDK"/>
    <property type="match status" value="1"/>
</dbReference>
<dbReference type="SUPFAM" id="SSF54919">
    <property type="entry name" value="Nucleoside diphosphate kinase, NDK"/>
    <property type="match status" value="1"/>
</dbReference>
<dbReference type="PROSITE" id="PS00469">
    <property type="entry name" value="NDPK"/>
    <property type="match status" value="1"/>
</dbReference>
<dbReference type="PROSITE" id="PS51374">
    <property type="entry name" value="NDPK_LIKE"/>
    <property type="match status" value="1"/>
</dbReference>
<comment type="function">
    <text evidence="3">Major role in the synthesis of nucleoside triphosphates other than ATP. The ATP gamma phosphate is transferred to the NDP beta phosphate via a ping-pong mechanism, using a phosphorylated active-site intermediate.</text>
</comment>
<comment type="function">
    <text evidence="1">(Microbial infection) Catalyzes the phosphorylation of dZDP to dZTP, when the bacterium is infected by a phage that produces the substrate for the synthesis of dZTP (2- amino-2'-deoxyadenosine 5'-triphosphate), which is then used by the phage as a DNA polymerase substrate.</text>
</comment>
<comment type="catalytic activity">
    <reaction evidence="2">
        <text>dZDP + ATP = dZTP + ADP</text>
        <dbReference type="Rhea" id="RHEA:67644"/>
        <dbReference type="ChEBI" id="CHEBI:30616"/>
        <dbReference type="ChEBI" id="CHEBI:172929"/>
        <dbReference type="ChEBI" id="CHEBI:172931"/>
        <dbReference type="ChEBI" id="CHEBI:456216"/>
    </reaction>
</comment>
<comment type="catalytic activity">
    <reaction evidence="3">
        <text>a 2'-deoxyribonucleoside 5'-diphosphate + ATP = a 2'-deoxyribonucleoside 5'-triphosphate + ADP</text>
        <dbReference type="Rhea" id="RHEA:44640"/>
        <dbReference type="ChEBI" id="CHEBI:30616"/>
        <dbReference type="ChEBI" id="CHEBI:61560"/>
        <dbReference type="ChEBI" id="CHEBI:73316"/>
        <dbReference type="ChEBI" id="CHEBI:456216"/>
        <dbReference type="EC" id="2.7.4.6"/>
    </reaction>
</comment>
<comment type="catalytic activity">
    <reaction evidence="3">
        <text>a ribonucleoside 5'-diphosphate + ATP = a ribonucleoside 5'-triphosphate + ADP</text>
        <dbReference type="Rhea" id="RHEA:18113"/>
        <dbReference type="ChEBI" id="CHEBI:30616"/>
        <dbReference type="ChEBI" id="CHEBI:57930"/>
        <dbReference type="ChEBI" id="CHEBI:61557"/>
        <dbReference type="ChEBI" id="CHEBI:456216"/>
        <dbReference type="EC" id="2.7.4.6"/>
    </reaction>
</comment>
<comment type="cofactor">
    <cofactor evidence="3">
        <name>Mg(2+)</name>
        <dbReference type="ChEBI" id="CHEBI:18420"/>
    </cofactor>
</comment>
<comment type="pathway">
    <text evidence="2">Purine metabolism.</text>
</comment>
<comment type="subunit">
    <text evidence="3">Homotetramer.</text>
</comment>
<comment type="subcellular location">
    <subcellularLocation>
        <location evidence="3">Cytoplasm</location>
    </subcellularLocation>
</comment>
<comment type="similarity">
    <text evidence="3">Belongs to the NDK family.</text>
</comment>
<keyword id="KW-0067">ATP-binding</keyword>
<keyword id="KW-0963">Cytoplasm</keyword>
<keyword id="KW-0418">Kinase</keyword>
<keyword id="KW-0460">Magnesium</keyword>
<keyword id="KW-0479">Metal-binding</keyword>
<keyword id="KW-0546">Nucleotide metabolism</keyword>
<keyword id="KW-0547">Nucleotide-binding</keyword>
<keyword id="KW-0597">Phosphoprotein</keyword>
<keyword id="KW-0808">Transferase</keyword>
<evidence type="ECO:0000250" key="1">
    <source>
        <dbReference type="UniProtKB" id="Q9KNM4"/>
    </source>
</evidence>
<evidence type="ECO:0000250" key="2">
    <source>
        <dbReference type="UniProtKB" id="Q9KTX4"/>
    </source>
</evidence>
<evidence type="ECO:0000255" key="3">
    <source>
        <dbReference type="HAMAP-Rule" id="MF_00451"/>
    </source>
</evidence>